<feature type="chain" id="PRO_0000128767" description="4-hydroxy-3-methylbut-2-enyl diphosphate reductase">
    <location>
        <begin position="1"/>
        <end position="312"/>
    </location>
</feature>
<feature type="active site" description="Proton donor" evidence="1">
    <location>
        <position position="129"/>
    </location>
</feature>
<feature type="binding site" evidence="1">
    <location>
        <position position="15"/>
    </location>
    <ligand>
        <name>[4Fe-4S] cluster</name>
        <dbReference type="ChEBI" id="CHEBI:49883"/>
    </ligand>
</feature>
<feature type="binding site" evidence="1">
    <location>
        <position position="44"/>
    </location>
    <ligand>
        <name>(2E)-4-hydroxy-3-methylbut-2-enyl diphosphate</name>
        <dbReference type="ChEBI" id="CHEBI:128753"/>
    </ligand>
</feature>
<feature type="binding site" evidence="1">
    <location>
        <position position="44"/>
    </location>
    <ligand>
        <name>dimethylallyl diphosphate</name>
        <dbReference type="ChEBI" id="CHEBI:57623"/>
    </ligand>
</feature>
<feature type="binding site" evidence="1">
    <location>
        <position position="44"/>
    </location>
    <ligand>
        <name>isopentenyl diphosphate</name>
        <dbReference type="ChEBI" id="CHEBI:128769"/>
    </ligand>
</feature>
<feature type="binding site" evidence="1">
    <location>
        <position position="77"/>
    </location>
    <ligand>
        <name>(2E)-4-hydroxy-3-methylbut-2-enyl diphosphate</name>
        <dbReference type="ChEBI" id="CHEBI:128753"/>
    </ligand>
</feature>
<feature type="binding site" evidence="1">
    <location>
        <position position="77"/>
    </location>
    <ligand>
        <name>dimethylallyl diphosphate</name>
        <dbReference type="ChEBI" id="CHEBI:57623"/>
    </ligand>
</feature>
<feature type="binding site" evidence="1">
    <location>
        <position position="77"/>
    </location>
    <ligand>
        <name>isopentenyl diphosphate</name>
        <dbReference type="ChEBI" id="CHEBI:128769"/>
    </ligand>
</feature>
<feature type="binding site" evidence="1">
    <location>
        <position position="99"/>
    </location>
    <ligand>
        <name>[4Fe-4S] cluster</name>
        <dbReference type="ChEBI" id="CHEBI:49883"/>
    </ligand>
</feature>
<feature type="binding site" evidence="1">
    <location>
        <position position="127"/>
    </location>
    <ligand>
        <name>(2E)-4-hydroxy-3-methylbut-2-enyl diphosphate</name>
        <dbReference type="ChEBI" id="CHEBI:128753"/>
    </ligand>
</feature>
<feature type="binding site" evidence="1">
    <location>
        <position position="127"/>
    </location>
    <ligand>
        <name>dimethylallyl diphosphate</name>
        <dbReference type="ChEBI" id="CHEBI:57623"/>
    </ligand>
</feature>
<feature type="binding site" evidence="1">
    <location>
        <position position="127"/>
    </location>
    <ligand>
        <name>isopentenyl diphosphate</name>
        <dbReference type="ChEBI" id="CHEBI:128769"/>
    </ligand>
</feature>
<feature type="binding site" evidence="1">
    <location>
        <position position="167"/>
    </location>
    <ligand>
        <name>(2E)-4-hydroxy-3-methylbut-2-enyl diphosphate</name>
        <dbReference type="ChEBI" id="CHEBI:128753"/>
    </ligand>
</feature>
<feature type="binding site" evidence="1">
    <location>
        <position position="197"/>
    </location>
    <ligand>
        <name>[4Fe-4S] cluster</name>
        <dbReference type="ChEBI" id="CHEBI:49883"/>
    </ligand>
</feature>
<feature type="binding site" evidence="1">
    <location>
        <position position="225"/>
    </location>
    <ligand>
        <name>(2E)-4-hydroxy-3-methylbut-2-enyl diphosphate</name>
        <dbReference type="ChEBI" id="CHEBI:128753"/>
    </ligand>
</feature>
<feature type="binding site" evidence="1">
    <location>
        <position position="225"/>
    </location>
    <ligand>
        <name>dimethylallyl diphosphate</name>
        <dbReference type="ChEBI" id="CHEBI:57623"/>
    </ligand>
</feature>
<feature type="binding site" evidence="1">
    <location>
        <position position="225"/>
    </location>
    <ligand>
        <name>isopentenyl diphosphate</name>
        <dbReference type="ChEBI" id="CHEBI:128769"/>
    </ligand>
</feature>
<feature type="binding site" evidence="1">
    <location>
        <position position="226"/>
    </location>
    <ligand>
        <name>(2E)-4-hydroxy-3-methylbut-2-enyl diphosphate</name>
        <dbReference type="ChEBI" id="CHEBI:128753"/>
    </ligand>
</feature>
<feature type="binding site" evidence="1">
    <location>
        <position position="226"/>
    </location>
    <ligand>
        <name>dimethylallyl diphosphate</name>
        <dbReference type="ChEBI" id="CHEBI:57623"/>
    </ligand>
</feature>
<feature type="binding site" evidence="1">
    <location>
        <position position="226"/>
    </location>
    <ligand>
        <name>isopentenyl diphosphate</name>
        <dbReference type="ChEBI" id="CHEBI:128769"/>
    </ligand>
</feature>
<feature type="binding site" evidence="1">
    <location>
        <position position="227"/>
    </location>
    <ligand>
        <name>(2E)-4-hydroxy-3-methylbut-2-enyl diphosphate</name>
        <dbReference type="ChEBI" id="CHEBI:128753"/>
    </ligand>
</feature>
<feature type="binding site" evidence="1">
    <location>
        <position position="227"/>
    </location>
    <ligand>
        <name>dimethylallyl diphosphate</name>
        <dbReference type="ChEBI" id="CHEBI:57623"/>
    </ligand>
</feature>
<feature type="binding site" evidence="1">
    <location>
        <position position="227"/>
    </location>
    <ligand>
        <name>isopentenyl diphosphate</name>
        <dbReference type="ChEBI" id="CHEBI:128769"/>
    </ligand>
</feature>
<feature type="binding site" evidence="1">
    <location>
        <position position="269"/>
    </location>
    <ligand>
        <name>(2E)-4-hydroxy-3-methylbut-2-enyl diphosphate</name>
        <dbReference type="ChEBI" id="CHEBI:128753"/>
    </ligand>
</feature>
<feature type="binding site" evidence="1">
    <location>
        <position position="269"/>
    </location>
    <ligand>
        <name>dimethylallyl diphosphate</name>
        <dbReference type="ChEBI" id="CHEBI:57623"/>
    </ligand>
</feature>
<feature type="binding site" evidence="1">
    <location>
        <position position="269"/>
    </location>
    <ligand>
        <name>isopentenyl diphosphate</name>
        <dbReference type="ChEBI" id="CHEBI:128769"/>
    </ligand>
</feature>
<comment type="function">
    <text evidence="1">Catalyzes the conversion of 1-hydroxy-2-methyl-2-(E)-butenyl 4-diphosphate (HMBPP) into a mixture of isopentenyl diphosphate (IPP) and dimethylallyl diphosphate (DMAPP). Acts in the terminal step of the DOXP/MEP pathway for isoprenoid precursor biosynthesis.</text>
</comment>
<comment type="catalytic activity">
    <reaction evidence="1">
        <text>isopentenyl diphosphate + 2 oxidized [2Fe-2S]-[ferredoxin] + H2O = (2E)-4-hydroxy-3-methylbut-2-enyl diphosphate + 2 reduced [2Fe-2S]-[ferredoxin] + 2 H(+)</text>
        <dbReference type="Rhea" id="RHEA:24488"/>
        <dbReference type="Rhea" id="RHEA-COMP:10000"/>
        <dbReference type="Rhea" id="RHEA-COMP:10001"/>
        <dbReference type="ChEBI" id="CHEBI:15377"/>
        <dbReference type="ChEBI" id="CHEBI:15378"/>
        <dbReference type="ChEBI" id="CHEBI:33737"/>
        <dbReference type="ChEBI" id="CHEBI:33738"/>
        <dbReference type="ChEBI" id="CHEBI:128753"/>
        <dbReference type="ChEBI" id="CHEBI:128769"/>
        <dbReference type="EC" id="1.17.7.4"/>
    </reaction>
</comment>
<comment type="catalytic activity">
    <reaction evidence="1">
        <text>dimethylallyl diphosphate + 2 oxidized [2Fe-2S]-[ferredoxin] + H2O = (2E)-4-hydroxy-3-methylbut-2-enyl diphosphate + 2 reduced [2Fe-2S]-[ferredoxin] + 2 H(+)</text>
        <dbReference type="Rhea" id="RHEA:24825"/>
        <dbReference type="Rhea" id="RHEA-COMP:10000"/>
        <dbReference type="Rhea" id="RHEA-COMP:10001"/>
        <dbReference type="ChEBI" id="CHEBI:15377"/>
        <dbReference type="ChEBI" id="CHEBI:15378"/>
        <dbReference type="ChEBI" id="CHEBI:33737"/>
        <dbReference type="ChEBI" id="CHEBI:33738"/>
        <dbReference type="ChEBI" id="CHEBI:57623"/>
        <dbReference type="ChEBI" id="CHEBI:128753"/>
        <dbReference type="EC" id="1.17.7.4"/>
    </reaction>
</comment>
<comment type="cofactor">
    <cofactor evidence="1">
        <name>[4Fe-4S] cluster</name>
        <dbReference type="ChEBI" id="CHEBI:49883"/>
    </cofactor>
    <text evidence="1">Binds 1 [4Fe-4S] cluster per subunit.</text>
</comment>
<comment type="pathway">
    <text evidence="1">Isoprenoid biosynthesis; dimethylallyl diphosphate biosynthesis; dimethylallyl diphosphate from (2E)-4-hydroxy-3-methylbutenyl diphosphate: step 1/1.</text>
</comment>
<comment type="pathway">
    <text evidence="1">Isoprenoid biosynthesis; isopentenyl diphosphate biosynthesis via DXP pathway; isopentenyl diphosphate from 1-deoxy-D-xylulose 5-phosphate: step 6/6.</text>
</comment>
<comment type="similarity">
    <text evidence="1">Belongs to the IspH family.</text>
</comment>
<protein>
    <recommendedName>
        <fullName evidence="1">4-hydroxy-3-methylbut-2-enyl diphosphate reductase</fullName>
        <shortName evidence="1">HMBPP reductase</shortName>
        <ecNumber evidence="1">1.17.7.4</ecNumber>
    </recommendedName>
</protein>
<reference key="1">
    <citation type="journal article" date="2005" name="Arch. Microbiol.">
        <title>The genome sequence of an anaerobic aromatic-degrading denitrifying bacterium, strain EbN1.</title>
        <authorList>
            <person name="Rabus R."/>
            <person name="Kube M."/>
            <person name="Heider J."/>
            <person name="Beck A."/>
            <person name="Heitmann K."/>
            <person name="Widdel F."/>
            <person name="Reinhardt R."/>
        </authorList>
    </citation>
    <scope>NUCLEOTIDE SEQUENCE [LARGE SCALE GENOMIC DNA]</scope>
    <source>
        <strain>DSM 19018 / LMG 30748 / EbN1</strain>
    </source>
</reference>
<accession>Q5P224</accession>
<organism>
    <name type="scientific">Aromatoleum aromaticum (strain DSM 19018 / LMG 30748 / EbN1)</name>
    <name type="common">Azoarcus sp. (strain EbN1)</name>
    <dbReference type="NCBI Taxonomy" id="76114"/>
    <lineage>
        <taxon>Bacteria</taxon>
        <taxon>Pseudomonadati</taxon>
        <taxon>Pseudomonadota</taxon>
        <taxon>Betaproteobacteria</taxon>
        <taxon>Rhodocyclales</taxon>
        <taxon>Rhodocyclaceae</taxon>
        <taxon>Aromatoleum</taxon>
    </lineage>
</organism>
<dbReference type="EC" id="1.17.7.4" evidence="1"/>
<dbReference type="EMBL" id="CR555306">
    <property type="protein sequence ID" value="CAI08640.1"/>
    <property type="molecule type" value="Genomic_DNA"/>
</dbReference>
<dbReference type="RefSeq" id="WP_011238324.1">
    <property type="nucleotide sequence ID" value="NC_006513.1"/>
</dbReference>
<dbReference type="SMR" id="Q5P224"/>
<dbReference type="STRING" id="76114.ebA4444"/>
<dbReference type="KEGG" id="eba:ebA4444"/>
<dbReference type="eggNOG" id="COG0761">
    <property type="taxonomic scope" value="Bacteria"/>
</dbReference>
<dbReference type="HOGENOM" id="CLU_027486_1_0_4"/>
<dbReference type="OrthoDB" id="9804068at2"/>
<dbReference type="UniPathway" id="UPA00056">
    <property type="reaction ID" value="UER00097"/>
</dbReference>
<dbReference type="UniPathway" id="UPA00059">
    <property type="reaction ID" value="UER00105"/>
</dbReference>
<dbReference type="Proteomes" id="UP000006552">
    <property type="component" value="Chromosome"/>
</dbReference>
<dbReference type="GO" id="GO:0051539">
    <property type="term" value="F:4 iron, 4 sulfur cluster binding"/>
    <property type="evidence" value="ECO:0007669"/>
    <property type="project" value="UniProtKB-UniRule"/>
</dbReference>
<dbReference type="GO" id="GO:0051745">
    <property type="term" value="F:4-hydroxy-3-methylbut-2-enyl diphosphate reductase activity"/>
    <property type="evidence" value="ECO:0007669"/>
    <property type="project" value="UniProtKB-UniRule"/>
</dbReference>
<dbReference type="GO" id="GO:0046872">
    <property type="term" value="F:metal ion binding"/>
    <property type="evidence" value="ECO:0007669"/>
    <property type="project" value="UniProtKB-KW"/>
</dbReference>
<dbReference type="GO" id="GO:0050992">
    <property type="term" value="P:dimethylallyl diphosphate biosynthetic process"/>
    <property type="evidence" value="ECO:0007669"/>
    <property type="project" value="UniProtKB-UniRule"/>
</dbReference>
<dbReference type="GO" id="GO:0019288">
    <property type="term" value="P:isopentenyl diphosphate biosynthetic process, methylerythritol 4-phosphate pathway"/>
    <property type="evidence" value="ECO:0007669"/>
    <property type="project" value="UniProtKB-UniRule"/>
</dbReference>
<dbReference type="GO" id="GO:0016114">
    <property type="term" value="P:terpenoid biosynthetic process"/>
    <property type="evidence" value="ECO:0007669"/>
    <property type="project" value="UniProtKB-UniRule"/>
</dbReference>
<dbReference type="CDD" id="cd13944">
    <property type="entry name" value="lytB_ispH"/>
    <property type="match status" value="1"/>
</dbReference>
<dbReference type="Gene3D" id="3.40.50.11270">
    <property type="match status" value="1"/>
</dbReference>
<dbReference type="Gene3D" id="3.40.1010.20">
    <property type="entry name" value="4-hydroxy-3-methylbut-2-enyl diphosphate reductase, catalytic domain"/>
    <property type="match status" value="2"/>
</dbReference>
<dbReference type="HAMAP" id="MF_00191">
    <property type="entry name" value="IspH"/>
    <property type="match status" value="1"/>
</dbReference>
<dbReference type="InterPro" id="IPR003451">
    <property type="entry name" value="LytB/IspH"/>
</dbReference>
<dbReference type="NCBIfam" id="TIGR00216">
    <property type="entry name" value="ispH_lytB"/>
    <property type="match status" value="1"/>
</dbReference>
<dbReference type="NCBIfam" id="NF002188">
    <property type="entry name" value="PRK01045.1-2"/>
    <property type="match status" value="1"/>
</dbReference>
<dbReference type="NCBIfam" id="NF002190">
    <property type="entry name" value="PRK01045.1-4"/>
    <property type="match status" value="1"/>
</dbReference>
<dbReference type="PANTHER" id="PTHR30426">
    <property type="entry name" value="4-HYDROXY-3-METHYLBUT-2-ENYL DIPHOSPHATE REDUCTASE"/>
    <property type="match status" value="1"/>
</dbReference>
<dbReference type="PANTHER" id="PTHR30426:SF0">
    <property type="entry name" value="4-HYDROXY-3-METHYLBUT-2-ENYL DIPHOSPHATE REDUCTASE"/>
    <property type="match status" value="1"/>
</dbReference>
<dbReference type="Pfam" id="PF02401">
    <property type="entry name" value="LYTB"/>
    <property type="match status" value="1"/>
</dbReference>
<evidence type="ECO:0000255" key="1">
    <source>
        <dbReference type="HAMAP-Rule" id="MF_00191"/>
    </source>
</evidence>
<proteinExistence type="inferred from homology"/>
<keyword id="KW-0004">4Fe-4S</keyword>
<keyword id="KW-0408">Iron</keyword>
<keyword id="KW-0411">Iron-sulfur</keyword>
<keyword id="KW-0414">Isoprene biosynthesis</keyword>
<keyword id="KW-0479">Metal-binding</keyword>
<keyword id="KW-0560">Oxidoreductase</keyword>
<keyword id="KW-1185">Reference proteome</keyword>
<sequence>MDDKEILLANPRGFCAGVERAIEIVEQALARFGAPIYVRHEVVHNKFVVDGLRAKGAIFVEELDEVPTGQTVIFSAHGVPQAVRSEAERRGLRVFDATCPLVTKVHLEVARMREQGREIVMIGHKGHPEVEGTMGQVGDGIHLVEVVQDVANIEVADPQQLAYVTQTTLSVDDAATLVAALRARFPAIVGPKKDDICYATQNRQDAVKFMAPRVDVVFVVGSRNSSNSNRLREVAELLGVPAYLVDNAEGIEPIWLEDKKRVGVTAGASAPEVLVDAVVERLKELGASSVRTLEGVPERVTFPLPRELQTPD</sequence>
<name>ISPH_AROAE</name>
<gene>
    <name evidence="1" type="primary">ispH</name>
    <name type="ordered locus">AZOSEA25150</name>
    <name type="ORF">ebA4444</name>
</gene>